<protein>
    <recommendedName>
        <fullName evidence="1">Large ribosomal subunit protein uL16</fullName>
    </recommendedName>
    <alternativeName>
        <fullName evidence="3">50S ribosomal protein L16</fullName>
    </alternativeName>
</protein>
<proteinExistence type="inferred from homology"/>
<name>RL16_RALPJ</name>
<dbReference type="EMBL" id="CP001068">
    <property type="protein sequence ID" value="ACD28412.1"/>
    <property type="molecule type" value="Genomic_DNA"/>
</dbReference>
<dbReference type="SMR" id="B2UEL2"/>
<dbReference type="STRING" id="402626.Rpic_3290"/>
<dbReference type="KEGG" id="rpi:Rpic_3290"/>
<dbReference type="eggNOG" id="COG0197">
    <property type="taxonomic scope" value="Bacteria"/>
</dbReference>
<dbReference type="HOGENOM" id="CLU_078858_2_1_4"/>
<dbReference type="GO" id="GO:0022625">
    <property type="term" value="C:cytosolic large ribosomal subunit"/>
    <property type="evidence" value="ECO:0007669"/>
    <property type="project" value="TreeGrafter"/>
</dbReference>
<dbReference type="GO" id="GO:0019843">
    <property type="term" value="F:rRNA binding"/>
    <property type="evidence" value="ECO:0007669"/>
    <property type="project" value="UniProtKB-UniRule"/>
</dbReference>
<dbReference type="GO" id="GO:0003735">
    <property type="term" value="F:structural constituent of ribosome"/>
    <property type="evidence" value="ECO:0007669"/>
    <property type="project" value="InterPro"/>
</dbReference>
<dbReference type="GO" id="GO:0000049">
    <property type="term" value="F:tRNA binding"/>
    <property type="evidence" value="ECO:0007669"/>
    <property type="project" value="UniProtKB-KW"/>
</dbReference>
<dbReference type="GO" id="GO:0006412">
    <property type="term" value="P:translation"/>
    <property type="evidence" value="ECO:0007669"/>
    <property type="project" value="UniProtKB-UniRule"/>
</dbReference>
<dbReference type="CDD" id="cd01433">
    <property type="entry name" value="Ribosomal_L16_L10e"/>
    <property type="match status" value="1"/>
</dbReference>
<dbReference type="FunFam" id="3.90.1170.10:FF:000001">
    <property type="entry name" value="50S ribosomal protein L16"/>
    <property type="match status" value="1"/>
</dbReference>
<dbReference type="Gene3D" id="3.90.1170.10">
    <property type="entry name" value="Ribosomal protein L10e/L16"/>
    <property type="match status" value="1"/>
</dbReference>
<dbReference type="HAMAP" id="MF_01342">
    <property type="entry name" value="Ribosomal_uL16"/>
    <property type="match status" value="1"/>
</dbReference>
<dbReference type="InterPro" id="IPR047873">
    <property type="entry name" value="Ribosomal_uL16"/>
</dbReference>
<dbReference type="InterPro" id="IPR000114">
    <property type="entry name" value="Ribosomal_uL16_bact-type"/>
</dbReference>
<dbReference type="InterPro" id="IPR020798">
    <property type="entry name" value="Ribosomal_uL16_CS"/>
</dbReference>
<dbReference type="InterPro" id="IPR016180">
    <property type="entry name" value="Ribosomal_uL16_dom"/>
</dbReference>
<dbReference type="InterPro" id="IPR036920">
    <property type="entry name" value="Ribosomal_uL16_sf"/>
</dbReference>
<dbReference type="NCBIfam" id="TIGR01164">
    <property type="entry name" value="rplP_bact"/>
    <property type="match status" value="1"/>
</dbReference>
<dbReference type="PANTHER" id="PTHR12220">
    <property type="entry name" value="50S/60S RIBOSOMAL PROTEIN L16"/>
    <property type="match status" value="1"/>
</dbReference>
<dbReference type="PANTHER" id="PTHR12220:SF13">
    <property type="entry name" value="LARGE RIBOSOMAL SUBUNIT PROTEIN UL16M"/>
    <property type="match status" value="1"/>
</dbReference>
<dbReference type="Pfam" id="PF00252">
    <property type="entry name" value="Ribosomal_L16"/>
    <property type="match status" value="1"/>
</dbReference>
<dbReference type="PRINTS" id="PR00060">
    <property type="entry name" value="RIBOSOMALL16"/>
</dbReference>
<dbReference type="SUPFAM" id="SSF54686">
    <property type="entry name" value="Ribosomal protein L16p/L10e"/>
    <property type="match status" value="1"/>
</dbReference>
<dbReference type="PROSITE" id="PS00586">
    <property type="entry name" value="RIBOSOMAL_L16_1"/>
    <property type="match status" value="1"/>
</dbReference>
<sequence>MLQPKRRKYRKEQKGRNTGIATRGNAVSFGEFGLKAMGRGRLTARQIESARRAMTRHIKRGGRIWIRIFPDKPISKKPAEVRMGNGKGNPEYYVAEIQPGKMLYEMDGVGEELAREAFRLAAAKLPIATSFVVRQVGT</sequence>
<organism>
    <name type="scientific">Ralstonia pickettii (strain 12J)</name>
    <dbReference type="NCBI Taxonomy" id="402626"/>
    <lineage>
        <taxon>Bacteria</taxon>
        <taxon>Pseudomonadati</taxon>
        <taxon>Pseudomonadota</taxon>
        <taxon>Betaproteobacteria</taxon>
        <taxon>Burkholderiales</taxon>
        <taxon>Burkholderiaceae</taxon>
        <taxon>Ralstonia</taxon>
    </lineage>
</organism>
<reference key="1">
    <citation type="submission" date="2008-05" db="EMBL/GenBank/DDBJ databases">
        <title>Complete sequence of chromosome 1 of Ralstonia pickettii 12J.</title>
        <authorList>
            <person name="Lucas S."/>
            <person name="Copeland A."/>
            <person name="Lapidus A."/>
            <person name="Glavina del Rio T."/>
            <person name="Dalin E."/>
            <person name="Tice H."/>
            <person name="Bruce D."/>
            <person name="Goodwin L."/>
            <person name="Pitluck S."/>
            <person name="Meincke L."/>
            <person name="Brettin T."/>
            <person name="Detter J.C."/>
            <person name="Han C."/>
            <person name="Kuske C.R."/>
            <person name="Schmutz J."/>
            <person name="Larimer F."/>
            <person name="Land M."/>
            <person name="Hauser L."/>
            <person name="Kyrpides N."/>
            <person name="Mikhailova N."/>
            <person name="Marsh T."/>
            <person name="Richardson P."/>
        </authorList>
    </citation>
    <scope>NUCLEOTIDE SEQUENCE [LARGE SCALE GENOMIC DNA]</scope>
    <source>
        <strain>12J</strain>
    </source>
</reference>
<comment type="function">
    <text evidence="1">Binds 23S rRNA and is also seen to make contacts with the A and possibly P site tRNAs.</text>
</comment>
<comment type="subunit">
    <text evidence="1">Part of the 50S ribosomal subunit.</text>
</comment>
<comment type="similarity">
    <text evidence="1">Belongs to the universal ribosomal protein uL16 family.</text>
</comment>
<accession>B2UEL2</accession>
<gene>
    <name evidence="1" type="primary">rplP</name>
    <name type="ordered locus">Rpic_3290</name>
</gene>
<evidence type="ECO:0000255" key="1">
    <source>
        <dbReference type="HAMAP-Rule" id="MF_01342"/>
    </source>
</evidence>
<evidence type="ECO:0000256" key="2">
    <source>
        <dbReference type="SAM" id="MobiDB-lite"/>
    </source>
</evidence>
<evidence type="ECO:0000305" key="3"/>
<feature type="chain" id="PRO_1000143015" description="Large ribosomal subunit protein uL16">
    <location>
        <begin position="1"/>
        <end position="138"/>
    </location>
</feature>
<feature type="region of interest" description="Disordered" evidence="2">
    <location>
        <begin position="1"/>
        <end position="20"/>
    </location>
</feature>
<feature type="compositionally biased region" description="Basic residues" evidence="2">
    <location>
        <begin position="1"/>
        <end position="13"/>
    </location>
</feature>
<keyword id="KW-0687">Ribonucleoprotein</keyword>
<keyword id="KW-0689">Ribosomal protein</keyword>
<keyword id="KW-0694">RNA-binding</keyword>
<keyword id="KW-0699">rRNA-binding</keyword>
<keyword id="KW-0820">tRNA-binding</keyword>